<keyword id="KW-0004">4Fe-4S</keyword>
<keyword id="KW-0249">Electron transport</keyword>
<keyword id="KW-0408">Iron</keyword>
<keyword id="KW-0411">Iron-sulfur</keyword>
<keyword id="KW-0479">Metal-binding</keyword>
<keyword id="KW-0500">Molybdenum</keyword>
<keyword id="KW-0534">Nitrate assimilation</keyword>
<keyword id="KW-0560">Oxidoreductase</keyword>
<keyword id="KW-0574">Periplasm</keyword>
<keyword id="KW-1185">Reference proteome</keyword>
<keyword id="KW-0732">Signal</keyword>
<keyword id="KW-0813">Transport</keyword>
<evidence type="ECO:0000255" key="1">
    <source>
        <dbReference type="HAMAP-Rule" id="MF_01630"/>
    </source>
</evidence>
<proteinExistence type="inferred from homology"/>
<name>NAPA_SHIDS</name>
<comment type="function">
    <text evidence="1">Catalytic subunit of the periplasmic nitrate reductase complex NapAB. Receives electrons from NapB and catalyzes the reduction of nitrate to nitrite.</text>
</comment>
<comment type="catalytic activity">
    <reaction evidence="1">
        <text>2 Fe(II)-[cytochrome] + nitrate + 2 H(+) = 2 Fe(III)-[cytochrome] + nitrite + H2O</text>
        <dbReference type="Rhea" id="RHEA:12909"/>
        <dbReference type="Rhea" id="RHEA-COMP:11777"/>
        <dbReference type="Rhea" id="RHEA-COMP:11778"/>
        <dbReference type="ChEBI" id="CHEBI:15377"/>
        <dbReference type="ChEBI" id="CHEBI:15378"/>
        <dbReference type="ChEBI" id="CHEBI:16301"/>
        <dbReference type="ChEBI" id="CHEBI:17632"/>
        <dbReference type="ChEBI" id="CHEBI:29033"/>
        <dbReference type="ChEBI" id="CHEBI:29034"/>
        <dbReference type="EC" id="1.9.6.1"/>
    </reaction>
</comment>
<comment type="cofactor">
    <cofactor evidence="1">
        <name>[4Fe-4S] cluster</name>
        <dbReference type="ChEBI" id="CHEBI:49883"/>
    </cofactor>
    <text evidence="1">Binds 1 [4Fe-4S] cluster.</text>
</comment>
<comment type="cofactor">
    <cofactor evidence="1">
        <name>Mo-bis(molybdopterin guanine dinucleotide)</name>
        <dbReference type="ChEBI" id="CHEBI:60539"/>
    </cofactor>
    <text evidence="1">Binds 1 molybdenum-bis(molybdopterin guanine dinucleotide) (Mo-bis-MGD) cofactor per subunit.</text>
</comment>
<comment type="subunit">
    <text evidence="1">Component of the periplasmic nitrate reductase NapAB complex composed of NapA and NapB.</text>
</comment>
<comment type="subcellular location">
    <subcellularLocation>
        <location evidence="1">Periplasm</location>
    </subcellularLocation>
</comment>
<comment type="PTM">
    <text evidence="1">Predicted to be exported by the Tat system. The position of the signal peptide cleavage has not been experimentally proven.</text>
</comment>
<comment type="similarity">
    <text evidence="1">Belongs to the prokaryotic molybdopterin-containing oxidoreductase family. NasA/NapA/NarB subfamily.</text>
</comment>
<protein>
    <recommendedName>
        <fullName evidence="1">Periplasmic nitrate reductase</fullName>
        <ecNumber evidence="1">1.9.6.1</ecNumber>
    </recommendedName>
</protein>
<dbReference type="EC" id="1.9.6.1" evidence="1"/>
<dbReference type="EMBL" id="CP000034">
    <property type="protein sequence ID" value="ABB61049.1"/>
    <property type="molecule type" value="Genomic_DNA"/>
</dbReference>
<dbReference type="RefSeq" id="WP_000778031.1">
    <property type="nucleotide sequence ID" value="NC_007606.1"/>
</dbReference>
<dbReference type="RefSeq" id="YP_402540.1">
    <property type="nucleotide sequence ID" value="NC_007606.1"/>
</dbReference>
<dbReference type="SMR" id="Q32I06"/>
<dbReference type="STRING" id="300267.SDY_0872"/>
<dbReference type="EnsemblBacteria" id="ABB61049">
    <property type="protein sequence ID" value="ABB61049"/>
    <property type="gene ID" value="SDY_0872"/>
</dbReference>
<dbReference type="KEGG" id="sdy:SDY_0872"/>
<dbReference type="PATRIC" id="fig|300267.13.peg.1007"/>
<dbReference type="HOGENOM" id="CLU_000422_13_4_6"/>
<dbReference type="Proteomes" id="UP000002716">
    <property type="component" value="Chromosome"/>
</dbReference>
<dbReference type="GO" id="GO:0016020">
    <property type="term" value="C:membrane"/>
    <property type="evidence" value="ECO:0007669"/>
    <property type="project" value="TreeGrafter"/>
</dbReference>
<dbReference type="GO" id="GO:0009325">
    <property type="term" value="C:nitrate reductase complex"/>
    <property type="evidence" value="ECO:0007669"/>
    <property type="project" value="TreeGrafter"/>
</dbReference>
<dbReference type="GO" id="GO:0042597">
    <property type="term" value="C:periplasmic space"/>
    <property type="evidence" value="ECO:0007669"/>
    <property type="project" value="UniProtKB-SubCell"/>
</dbReference>
<dbReference type="GO" id="GO:0051539">
    <property type="term" value="F:4 iron, 4 sulfur cluster binding"/>
    <property type="evidence" value="ECO:0007669"/>
    <property type="project" value="UniProtKB-KW"/>
</dbReference>
<dbReference type="GO" id="GO:0009055">
    <property type="term" value="F:electron transfer activity"/>
    <property type="evidence" value="ECO:0007669"/>
    <property type="project" value="UniProtKB-UniRule"/>
</dbReference>
<dbReference type="GO" id="GO:0005506">
    <property type="term" value="F:iron ion binding"/>
    <property type="evidence" value="ECO:0007669"/>
    <property type="project" value="UniProtKB-UniRule"/>
</dbReference>
<dbReference type="GO" id="GO:0030151">
    <property type="term" value="F:molybdenum ion binding"/>
    <property type="evidence" value="ECO:0007669"/>
    <property type="project" value="InterPro"/>
</dbReference>
<dbReference type="GO" id="GO:0043546">
    <property type="term" value="F:molybdopterin cofactor binding"/>
    <property type="evidence" value="ECO:0007669"/>
    <property type="project" value="InterPro"/>
</dbReference>
<dbReference type="GO" id="GO:0050140">
    <property type="term" value="F:nitrate reductase (cytochrome) activity"/>
    <property type="evidence" value="ECO:0007669"/>
    <property type="project" value="UniProtKB-EC"/>
</dbReference>
<dbReference type="GO" id="GO:0045333">
    <property type="term" value="P:cellular respiration"/>
    <property type="evidence" value="ECO:0007669"/>
    <property type="project" value="UniProtKB-ARBA"/>
</dbReference>
<dbReference type="GO" id="GO:0006777">
    <property type="term" value="P:Mo-molybdopterin cofactor biosynthetic process"/>
    <property type="evidence" value="ECO:0007669"/>
    <property type="project" value="UniProtKB-UniRule"/>
</dbReference>
<dbReference type="GO" id="GO:0042128">
    <property type="term" value="P:nitrate assimilation"/>
    <property type="evidence" value="ECO:0007669"/>
    <property type="project" value="UniProtKB-UniRule"/>
</dbReference>
<dbReference type="CDD" id="cd02791">
    <property type="entry name" value="MopB_CT_Nitrate-R-NapA-like"/>
    <property type="match status" value="1"/>
</dbReference>
<dbReference type="CDD" id="cd02754">
    <property type="entry name" value="MopB_Nitrate-R-NapA-like"/>
    <property type="match status" value="1"/>
</dbReference>
<dbReference type="FunFam" id="2.40.40.20:FF:000005">
    <property type="entry name" value="Periplasmic nitrate reductase"/>
    <property type="match status" value="1"/>
</dbReference>
<dbReference type="FunFam" id="3.40.228.10:FF:000001">
    <property type="entry name" value="Periplasmic nitrate reductase"/>
    <property type="match status" value="1"/>
</dbReference>
<dbReference type="Gene3D" id="2.40.40.20">
    <property type="match status" value="1"/>
</dbReference>
<dbReference type="Gene3D" id="3.30.200.210">
    <property type="match status" value="1"/>
</dbReference>
<dbReference type="Gene3D" id="3.40.50.740">
    <property type="match status" value="1"/>
</dbReference>
<dbReference type="Gene3D" id="3.40.228.10">
    <property type="entry name" value="Dimethylsulfoxide Reductase, domain 2"/>
    <property type="match status" value="1"/>
</dbReference>
<dbReference type="HAMAP" id="MF_01630">
    <property type="entry name" value="Nitrate_reduct_NapA"/>
    <property type="match status" value="1"/>
</dbReference>
<dbReference type="InterPro" id="IPR009010">
    <property type="entry name" value="Asp_de-COase-like_dom_sf"/>
</dbReference>
<dbReference type="InterPro" id="IPR041957">
    <property type="entry name" value="CT_Nitrate-R-NapA-like"/>
</dbReference>
<dbReference type="InterPro" id="IPR006657">
    <property type="entry name" value="MoPterin_dinucl-bd_dom"/>
</dbReference>
<dbReference type="InterPro" id="IPR006656">
    <property type="entry name" value="Mopterin_OxRdtase"/>
</dbReference>
<dbReference type="InterPro" id="IPR006963">
    <property type="entry name" value="Mopterin_OxRdtase_4Fe-4S_dom"/>
</dbReference>
<dbReference type="InterPro" id="IPR027467">
    <property type="entry name" value="MopterinOxRdtase_cofactor_BS"/>
</dbReference>
<dbReference type="InterPro" id="IPR010051">
    <property type="entry name" value="Periplasm_NO3_reductase_lsu"/>
</dbReference>
<dbReference type="InterPro" id="IPR050123">
    <property type="entry name" value="Prok_molybdopt-oxidoreductase"/>
</dbReference>
<dbReference type="InterPro" id="IPR006311">
    <property type="entry name" value="TAT_signal"/>
</dbReference>
<dbReference type="InterPro" id="IPR019546">
    <property type="entry name" value="TAT_signal_bac_arc"/>
</dbReference>
<dbReference type="NCBIfam" id="TIGR01706">
    <property type="entry name" value="NAPA"/>
    <property type="match status" value="1"/>
</dbReference>
<dbReference type="NCBIfam" id="NF010055">
    <property type="entry name" value="PRK13532.1"/>
    <property type="match status" value="1"/>
</dbReference>
<dbReference type="NCBIfam" id="TIGR01409">
    <property type="entry name" value="TAT_signal_seq"/>
    <property type="match status" value="1"/>
</dbReference>
<dbReference type="PANTHER" id="PTHR43105:SF11">
    <property type="entry name" value="PERIPLASMIC NITRATE REDUCTASE"/>
    <property type="match status" value="1"/>
</dbReference>
<dbReference type="PANTHER" id="PTHR43105">
    <property type="entry name" value="RESPIRATORY NITRATE REDUCTASE"/>
    <property type="match status" value="1"/>
</dbReference>
<dbReference type="Pfam" id="PF04879">
    <property type="entry name" value="Molybdop_Fe4S4"/>
    <property type="match status" value="1"/>
</dbReference>
<dbReference type="Pfam" id="PF00384">
    <property type="entry name" value="Molybdopterin"/>
    <property type="match status" value="1"/>
</dbReference>
<dbReference type="Pfam" id="PF01568">
    <property type="entry name" value="Molydop_binding"/>
    <property type="match status" value="1"/>
</dbReference>
<dbReference type="SMART" id="SM00926">
    <property type="entry name" value="Molybdop_Fe4S4"/>
    <property type="match status" value="1"/>
</dbReference>
<dbReference type="SUPFAM" id="SSF50692">
    <property type="entry name" value="ADC-like"/>
    <property type="match status" value="1"/>
</dbReference>
<dbReference type="SUPFAM" id="SSF53706">
    <property type="entry name" value="Formate dehydrogenase/DMSO reductase, domains 1-3"/>
    <property type="match status" value="1"/>
</dbReference>
<dbReference type="PROSITE" id="PS51669">
    <property type="entry name" value="4FE4S_MOW_BIS_MGD"/>
    <property type="match status" value="1"/>
</dbReference>
<dbReference type="PROSITE" id="PS00551">
    <property type="entry name" value="MOLYBDOPTERIN_PROK_1"/>
    <property type="match status" value="1"/>
</dbReference>
<dbReference type="PROSITE" id="PS51318">
    <property type="entry name" value="TAT"/>
    <property type="match status" value="1"/>
</dbReference>
<organism>
    <name type="scientific">Shigella dysenteriae serotype 1 (strain Sd197)</name>
    <dbReference type="NCBI Taxonomy" id="300267"/>
    <lineage>
        <taxon>Bacteria</taxon>
        <taxon>Pseudomonadati</taxon>
        <taxon>Pseudomonadota</taxon>
        <taxon>Gammaproteobacteria</taxon>
        <taxon>Enterobacterales</taxon>
        <taxon>Enterobacteriaceae</taxon>
        <taxon>Shigella</taxon>
    </lineage>
</organism>
<accession>Q32I06</accession>
<feature type="signal peptide" description="Tat-type signal" evidence="1">
    <location>
        <begin position="1"/>
        <end position="31"/>
    </location>
</feature>
<feature type="chain" id="PRO_0000046005" description="Periplasmic nitrate reductase" evidence="1">
    <location>
        <begin position="32"/>
        <end position="828"/>
    </location>
</feature>
<feature type="domain" description="4Fe-4S Mo/W bis-MGD-type" evidence="1">
    <location>
        <begin position="39"/>
        <end position="95"/>
    </location>
</feature>
<feature type="binding site" evidence="1">
    <location>
        <position position="46"/>
    </location>
    <ligand>
        <name>[4Fe-4S] cluster</name>
        <dbReference type="ChEBI" id="CHEBI:49883"/>
    </ligand>
</feature>
<feature type="binding site" evidence="1">
    <location>
        <position position="49"/>
    </location>
    <ligand>
        <name>[4Fe-4S] cluster</name>
        <dbReference type="ChEBI" id="CHEBI:49883"/>
    </ligand>
</feature>
<feature type="binding site" evidence="1">
    <location>
        <position position="53"/>
    </location>
    <ligand>
        <name>[4Fe-4S] cluster</name>
        <dbReference type="ChEBI" id="CHEBI:49883"/>
    </ligand>
</feature>
<feature type="binding site" evidence="1">
    <location>
        <position position="81"/>
    </location>
    <ligand>
        <name>[4Fe-4S] cluster</name>
        <dbReference type="ChEBI" id="CHEBI:49883"/>
    </ligand>
</feature>
<feature type="binding site" evidence="1">
    <location>
        <position position="83"/>
    </location>
    <ligand>
        <name>Mo-bis(molybdopterin guanine dinucleotide)</name>
        <dbReference type="ChEBI" id="CHEBI:60539"/>
    </ligand>
</feature>
<feature type="binding site" evidence="1">
    <location>
        <position position="150"/>
    </location>
    <ligand>
        <name>Mo-bis(molybdopterin guanine dinucleotide)</name>
        <dbReference type="ChEBI" id="CHEBI:60539"/>
    </ligand>
</feature>
<feature type="binding site" evidence="1">
    <location>
        <position position="175"/>
    </location>
    <ligand>
        <name>Mo-bis(molybdopterin guanine dinucleotide)</name>
        <dbReference type="ChEBI" id="CHEBI:60539"/>
    </ligand>
</feature>
<feature type="binding site" evidence="1">
    <location>
        <position position="179"/>
    </location>
    <ligand>
        <name>Mo-bis(molybdopterin guanine dinucleotide)</name>
        <dbReference type="ChEBI" id="CHEBI:60539"/>
    </ligand>
</feature>
<feature type="binding site" evidence="1">
    <location>
        <begin position="212"/>
        <end position="219"/>
    </location>
    <ligand>
        <name>Mo-bis(molybdopterin guanine dinucleotide)</name>
        <dbReference type="ChEBI" id="CHEBI:60539"/>
    </ligand>
</feature>
<feature type="binding site" evidence="1">
    <location>
        <begin position="243"/>
        <end position="247"/>
    </location>
    <ligand>
        <name>Mo-bis(molybdopterin guanine dinucleotide)</name>
        <dbReference type="ChEBI" id="CHEBI:60539"/>
    </ligand>
</feature>
<feature type="binding site" evidence="1">
    <location>
        <begin position="262"/>
        <end position="264"/>
    </location>
    <ligand>
        <name>Mo-bis(molybdopterin guanine dinucleotide)</name>
        <dbReference type="ChEBI" id="CHEBI:60539"/>
    </ligand>
</feature>
<feature type="binding site" evidence="1">
    <location>
        <position position="372"/>
    </location>
    <ligand>
        <name>Mo-bis(molybdopterin guanine dinucleotide)</name>
        <dbReference type="ChEBI" id="CHEBI:60539"/>
    </ligand>
</feature>
<feature type="binding site" evidence="1">
    <location>
        <position position="376"/>
    </location>
    <ligand>
        <name>Mo-bis(molybdopterin guanine dinucleotide)</name>
        <dbReference type="ChEBI" id="CHEBI:60539"/>
    </ligand>
</feature>
<feature type="binding site" evidence="1">
    <location>
        <position position="482"/>
    </location>
    <ligand>
        <name>Mo-bis(molybdopterin guanine dinucleotide)</name>
        <dbReference type="ChEBI" id="CHEBI:60539"/>
    </ligand>
</feature>
<feature type="binding site" evidence="1">
    <location>
        <begin position="508"/>
        <end position="509"/>
    </location>
    <ligand>
        <name>Mo-bis(molybdopterin guanine dinucleotide)</name>
        <dbReference type="ChEBI" id="CHEBI:60539"/>
    </ligand>
</feature>
<feature type="binding site" evidence="1">
    <location>
        <position position="531"/>
    </location>
    <ligand>
        <name>Mo-bis(molybdopterin guanine dinucleotide)</name>
        <dbReference type="ChEBI" id="CHEBI:60539"/>
    </ligand>
</feature>
<feature type="binding site" evidence="1">
    <location>
        <position position="558"/>
    </location>
    <ligand>
        <name>Mo-bis(molybdopterin guanine dinucleotide)</name>
        <dbReference type="ChEBI" id="CHEBI:60539"/>
    </ligand>
</feature>
<feature type="binding site" evidence="1">
    <location>
        <begin position="718"/>
        <end position="727"/>
    </location>
    <ligand>
        <name>Mo-bis(molybdopterin guanine dinucleotide)</name>
        <dbReference type="ChEBI" id="CHEBI:60539"/>
    </ligand>
</feature>
<feature type="binding site" evidence="1">
    <location>
        <position position="794"/>
    </location>
    <ligand>
        <name>substrate</name>
    </ligand>
</feature>
<feature type="binding site" evidence="1">
    <location>
        <position position="802"/>
    </location>
    <ligand>
        <name>Mo-bis(molybdopterin guanine dinucleotide)</name>
        <dbReference type="ChEBI" id="CHEBI:60539"/>
    </ligand>
</feature>
<feature type="binding site" evidence="1">
    <location>
        <position position="819"/>
    </location>
    <ligand>
        <name>Mo-bis(molybdopterin guanine dinucleotide)</name>
        <dbReference type="ChEBI" id="CHEBI:60539"/>
    </ligand>
</feature>
<sequence>MKLSRRGFMKANAVAAAAAAAGLSVPGVARAVVGQQEAIKWDKAPCRFCGTGCGVLVGTQQGRVVACQGDPDAPVNRGLNCIKGYFLPKIMYGEDRLTQPLLRMKNGKYDKEGEFTPITWDQAFDVMEEKFKTALKEKGPESIGMFGSGQWTIWEGYAASKLFKAGFRSNNIDPNARHCMASAVVGFMRTFGMDEPMGCYDDIEQADAFVLWGANMAEMHPILWSRITNRRLSNQNVTVAVLSTYQHRSFELADNGIIFTPQSDLVILNYIANYIIQNNAINQDFFSKHVNLRKGATDIGYGLRPTHPLEKAAKNPGSDASEPMSFEDYKAFVAEYTLEKTAEMTGVPKDQLEQLAQLYADPNKKVISYWTMGFNQHTRGVWANNLVYNLHLLTGKISQPGCGPFSLTGQPSACGTAREVGTFAHRLPADMVVTNEKHRDICEKKWNIPSGTIPAKIGLHAVAQDRALKDGKLNVYWTMCTNNMQAGPNINEERMPGWRDPRNFIIVSDPYPTVSALAADLILPTAMWVEKEGAYGNAERRTQFWRQQVQAPGEAKSDLWQLVQFSRRFKTEEVWPEELLAKKPELRGKTLYEVLYATPEVSKFPVSELAEDQLNDESRELGFYLQKGLFEEYAWFGRGHGHDLAPFDDYHKARGLRWPVVNGKETQWRYSEGNDPYVKAGEGYKFYGKPDGKAVIFALPFEPAAEAPDEEYDLWLSTGRVLEHWHTGSMTRRVPELHRAFPEAVLFIHPLDAKARDLRRGDKVKVVSRRGEVISIVETRGRNRPPQGLVYMPFFDAAQLVNKLMLDATDPLSKETDFKKCAVKLEKV</sequence>
<gene>
    <name evidence="1" type="primary">napA</name>
    <name type="ordered locus">SDY_0872</name>
</gene>
<reference key="1">
    <citation type="journal article" date="2005" name="Nucleic Acids Res.">
        <title>Genome dynamics and diversity of Shigella species, the etiologic agents of bacillary dysentery.</title>
        <authorList>
            <person name="Yang F."/>
            <person name="Yang J."/>
            <person name="Zhang X."/>
            <person name="Chen L."/>
            <person name="Jiang Y."/>
            <person name="Yan Y."/>
            <person name="Tang X."/>
            <person name="Wang J."/>
            <person name="Xiong Z."/>
            <person name="Dong J."/>
            <person name="Xue Y."/>
            <person name="Zhu Y."/>
            <person name="Xu X."/>
            <person name="Sun L."/>
            <person name="Chen S."/>
            <person name="Nie H."/>
            <person name="Peng J."/>
            <person name="Xu J."/>
            <person name="Wang Y."/>
            <person name="Yuan Z."/>
            <person name="Wen Y."/>
            <person name="Yao Z."/>
            <person name="Shen Y."/>
            <person name="Qiang B."/>
            <person name="Hou Y."/>
            <person name="Yu J."/>
            <person name="Jin Q."/>
        </authorList>
    </citation>
    <scope>NUCLEOTIDE SEQUENCE [LARGE SCALE GENOMIC DNA]</scope>
    <source>
        <strain>Sd197</strain>
    </source>
</reference>